<sequence length="731" mass="80474">MSGSRQAGSGSAGTSPGSSAASSVTSASSSLSSSPSPPSVAVSAAALVSGGVAQAAGSGGLGGPVRPVLVAPAVSGSGGGAVSTGLSRHSCAARPSAGVGGSSSSLGSGSRKRPLLAPLCNGLINSYEDKSNDFVCPICFDMIEEAYMTKCGHSFCYKCIHQSLEDNNRCPKCNYVVDNIDHLYPNFLVNELILKQKQRFEEKRFKLDHSVSSTNGHRWQIFQDWLGTDQDNLDLANVNLMLELLVQKKKQLEAESHAAQLQILMEFLKVARRNKREQLEQIQKELSVLEEDIKRVEEMSGLYSPVSEDSTVPQFEAPSPSHSSIIDSTEYSQPPGFSGSSQTKKQPWYNSTLASRRKRLTAHFEDLEQCYFSTRMSRISDDSRTASQLDEFQECLSKFTRYNSVRPLATLSYASDLYNGSSIVSSIEFDRDCDYFAIAGVTKKIKVYEYDTVIQDAVDIHYPENEMTCNSKISCISWSSYHKNLLASSDYEGTVILWDGFTGQRSKVYQEHEKRCWSVDFNLMDPKLLASGSDDAKVKLWSTNLDNSVASIEAKANVCCVKFSPSSRYHLAFGCADHCVHYYDLRNTKQPIMVFKGHRKAVSYAKFVSGEEIVSASTDSQLKLWNVGKPYCLRSFKGHINEKNFVGLASNGDYIACGSENNSLYLYYKGLSKTLLTFKFDTVKSVLDKDRKEDDTNEFVSAVCWRALPDGESNVLIAANSQGTIKVLELV</sequence>
<reference key="1">
    <citation type="journal article" date="2002" name="BMC Cell Biol.">
        <title>An initial biochemical and cell biological characterization of the mammalian homologue of a central plant developmental switch, COP1.</title>
        <authorList>
            <person name="Yi C."/>
            <person name="Wang H."/>
            <person name="Wei N."/>
            <person name="Deng X.-W."/>
        </authorList>
    </citation>
    <scope>NUCLEOTIDE SEQUENCE [GENOMIC DNA] (ISOFORM 1)</scope>
    <scope>FUNCTION</scope>
    <scope>HOMODIMERIZATION</scope>
    <scope>SUBCELLULAR LOCATION</scope>
</reference>
<reference key="2">
    <citation type="journal article" date="2003" name="J. Biol. Chem.">
        <title>Characterization of human constitutive photomorphogenesis protein 1, a RING finger ubiquitin ligase that interacts with Jun transcription factors and modulates their transcriptional activity.</title>
        <authorList>
            <person name="Bianchi E."/>
            <person name="Denti S."/>
            <person name="Catena R."/>
            <person name="Rossetti G."/>
            <person name="Polo S."/>
            <person name="Gasparian S."/>
            <person name="Putignano S."/>
            <person name="Rogge L."/>
            <person name="Pardi R."/>
        </authorList>
    </citation>
    <scope>NUCLEOTIDE SEQUENCE [MRNA] (ISOFORM 1)</scope>
    <scope>FUNCTION</scope>
    <scope>SUBCELLULAR LOCATION</scope>
    <scope>TISSUE SPECIFICITY</scope>
    <scope>INTERACTION WITH JUN; JUNB AND JUND</scope>
    <scope>MUTAGENESIS OF 111-ARG--ARG-113; CYS-136 AND CYS-139</scope>
    <scope>CATALYTIC ACTIVITY</scope>
</reference>
<reference key="3">
    <citation type="journal article" date="2004" name="Science">
        <title>Human De-etiolated-1 regulates c-Jun by assembling a CUL4A ubiquitin ligase.</title>
        <authorList>
            <person name="Wertz I.E."/>
            <person name="O'Rourke K.M."/>
            <person name="Zhang Z."/>
            <person name="Dornan D."/>
            <person name="Arnott D."/>
            <person name="Deshaies R.J."/>
            <person name="Dixit V.M."/>
        </authorList>
    </citation>
    <scope>NUCLEOTIDE SEQUENCE [MRNA] (ISOFORM 2)</scope>
    <scope>IDENTIFICATION BY MASS SPECTROMETRY</scope>
    <scope>FUNCTION</scope>
    <scope>ALTERNATIVE SPLICING</scope>
    <scope>COMPONENT OF THE DCX DET1-COP1 COMPLEX WITH RBX1; CUL4A; DET1 AND DDB1</scope>
    <scope>MUTAGENESIS OF CYS-136 AND CYS-139</scope>
</reference>
<reference key="4">
    <citation type="journal article" date="2014" name="Nat. Commun.">
        <title>Protein interaction network of alternatively spliced isoforms from brain links genetic risk factors for autism.</title>
        <authorList>
            <person name="Corominas R."/>
            <person name="Yang X."/>
            <person name="Lin G.N."/>
            <person name="Kang S."/>
            <person name="Shen Y."/>
            <person name="Ghamsari L."/>
            <person name="Broly M."/>
            <person name="Rodriguez M."/>
            <person name="Tam S."/>
            <person name="Wanamaker S.A."/>
            <person name="Fan C."/>
            <person name="Yi S."/>
            <person name="Tasan M."/>
            <person name="Lemmens I."/>
            <person name="Kuang X."/>
            <person name="Zhao N."/>
            <person name="Malhotra D."/>
            <person name="Michaelson J.J."/>
            <person name="Vacic V."/>
            <person name="Calderwood M.A."/>
            <person name="Roth F.P."/>
            <person name="Tavernier J."/>
            <person name="Horvath S."/>
            <person name="Salehi-Ashtiani K."/>
            <person name="Korkin D."/>
            <person name="Sebat J."/>
            <person name="Hill D.E."/>
            <person name="Hao T."/>
            <person name="Vidal M."/>
            <person name="Iakoucheva L.M."/>
        </authorList>
    </citation>
    <scope>NUCLEOTIDE SEQUENCE [MRNA] (ISOFORMS 1 AND 5)</scope>
    <source>
        <tissue>Brain</tissue>
    </source>
</reference>
<reference key="5">
    <citation type="journal article" date="2004" name="Nat. Genet.">
        <title>Complete sequencing and characterization of 21,243 full-length human cDNAs.</title>
        <authorList>
            <person name="Ota T."/>
            <person name="Suzuki Y."/>
            <person name="Nishikawa T."/>
            <person name="Otsuki T."/>
            <person name="Sugiyama T."/>
            <person name="Irie R."/>
            <person name="Wakamatsu A."/>
            <person name="Hayashi K."/>
            <person name="Sato H."/>
            <person name="Nagai K."/>
            <person name="Kimura K."/>
            <person name="Makita H."/>
            <person name="Sekine M."/>
            <person name="Obayashi M."/>
            <person name="Nishi T."/>
            <person name="Shibahara T."/>
            <person name="Tanaka T."/>
            <person name="Ishii S."/>
            <person name="Yamamoto J."/>
            <person name="Saito K."/>
            <person name="Kawai Y."/>
            <person name="Isono Y."/>
            <person name="Nakamura Y."/>
            <person name="Nagahari K."/>
            <person name="Murakami K."/>
            <person name="Yasuda T."/>
            <person name="Iwayanagi T."/>
            <person name="Wagatsuma M."/>
            <person name="Shiratori A."/>
            <person name="Sudo H."/>
            <person name="Hosoiri T."/>
            <person name="Kaku Y."/>
            <person name="Kodaira H."/>
            <person name="Kondo H."/>
            <person name="Sugawara M."/>
            <person name="Takahashi M."/>
            <person name="Kanda K."/>
            <person name="Yokoi T."/>
            <person name="Furuya T."/>
            <person name="Kikkawa E."/>
            <person name="Omura Y."/>
            <person name="Abe K."/>
            <person name="Kamihara K."/>
            <person name="Katsuta N."/>
            <person name="Sato K."/>
            <person name="Tanikawa M."/>
            <person name="Yamazaki M."/>
            <person name="Ninomiya K."/>
            <person name="Ishibashi T."/>
            <person name="Yamashita H."/>
            <person name="Murakawa K."/>
            <person name="Fujimori K."/>
            <person name="Tanai H."/>
            <person name="Kimata M."/>
            <person name="Watanabe M."/>
            <person name="Hiraoka S."/>
            <person name="Chiba Y."/>
            <person name="Ishida S."/>
            <person name="Ono Y."/>
            <person name="Takiguchi S."/>
            <person name="Watanabe S."/>
            <person name="Yosida M."/>
            <person name="Hotuta T."/>
            <person name="Kusano J."/>
            <person name="Kanehori K."/>
            <person name="Takahashi-Fujii A."/>
            <person name="Hara H."/>
            <person name="Tanase T.-O."/>
            <person name="Nomura Y."/>
            <person name="Togiya S."/>
            <person name="Komai F."/>
            <person name="Hara R."/>
            <person name="Takeuchi K."/>
            <person name="Arita M."/>
            <person name="Imose N."/>
            <person name="Musashino K."/>
            <person name="Yuuki H."/>
            <person name="Oshima A."/>
            <person name="Sasaki N."/>
            <person name="Aotsuka S."/>
            <person name="Yoshikawa Y."/>
            <person name="Matsunawa H."/>
            <person name="Ichihara T."/>
            <person name="Shiohata N."/>
            <person name="Sano S."/>
            <person name="Moriya S."/>
            <person name="Momiyama H."/>
            <person name="Satoh N."/>
            <person name="Takami S."/>
            <person name="Terashima Y."/>
            <person name="Suzuki O."/>
            <person name="Nakagawa S."/>
            <person name="Senoh A."/>
            <person name="Mizoguchi H."/>
            <person name="Goto Y."/>
            <person name="Shimizu F."/>
            <person name="Wakebe H."/>
            <person name="Hishigaki H."/>
            <person name="Watanabe T."/>
            <person name="Sugiyama A."/>
            <person name="Takemoto M."/>
            <person name="Kawakami B."/>
            <person name="Yamazaki M."/>
            <person name="Watanabe K."/>
            <person name="Kumagai A."/>
            <person name="Itakura S."/>
            <person name="Fukuzumi Y."/>
            <person name="Fujimori Y."/>
            <person name="Komiyama M."/>
            <person name="Tashiro H."/>
            <person name="Tanigami A."/>
            <person name="Fujiwara T."/>
            <person name="Ono T."/>
            <person name="Yamada K."/>
            <person name="Fujii Y."/>
            <person name="Ozaki K."/>
            <person name="Hirao M."/>
            <person name="Ohmori Y."/>
            <person name="Kawabata A."/>
            <person name="Hikiji T."/>
            <person name="Kobatake N."/>
            <person name="Inagaki H."/>
            <person name="Ikema Y."/>
            <person name="Okamoto S."/>
            <person name="Okitani R."/>
            <person name="Kawakami T."/>
            <person name="Noguchi S."/>
            <person name="Itoh T."/>
            <person name="Shigeta K."/>
            <person name="Senba T."/>
            <person name="Matsumura K."/>
            <person name="Nakajima Y."/>
            <person name="Mizuno T."/>
            <person name="Morinaga M."/>
            <person name="Sasaki M."/>
            <person name="Togashi T."/>
            <person name="Oyama M."/>
            <person name="Hata H."/>
            <person name="Watanabe M."/>
            <person name="Komatsu T."/>
            <person name="Mizushima-Sugano J."/>
            <person name="Satoh T."/>
            <person name="Shirai Y."/>
            <person name="Takahashi Y."/>
            <person name="Nakagawa K."/>
            <person name="Okumura K."/>
            <person name="Nagase T."/>
            <person name="Nomura N."/>
            <person name="Kikuchi H."/>
            <person name="Masuho Y."/>
            <person name="Yamashita R."/>
            <person name="Nakai K."/>
            <person name="Yada T."/>
            <person name="Nakamura Y."/>
            <person name="Ohara O."/>
            <person name="Isogai T."/>
            <person name="Sugano S."/>
        </authorList>
    </citation>
    <scope>NUCLEOTIDE SEQUENCE [LARGE SCALE MRNA] (ISOFORMS 1 AND 3)</scope>
    <source>
        <tissue>Hepatoma</tissue>
        <tissue>Spleen</tissue>
    </source>
</reference>
<reference key="6">
    <citation type="journal article" date="2006" name="Nature">
        <title>The DNA sequence and biological annotation of human chromosome 1.</title>
        <authorList>
            <person name="Gregory S.G."/>
            <person name="Barlow K.F."/>
            <person name="McLay K.E."/>
            <person name="Kaul R."/>
            <person name="Swarbreck D."/>
            <person name="Dunham A."/>
            <person name="Scott C.E."/>
            <person name="Howe K.L."/>
            <person name="Woodfine K."/>
            <person name="Spencer C.C.A."/>
            <person name="Jones M.C."/>
            <person name="Gillson C."/>
            <person name="Searle S."/>
            <person name="Zhou Y."/>
            <person name="Kokocinski F."/>
            <person name="McDonald L."/>
            <person name="Evans R."/>
            <person name="Phillips K."/>
            <person name="Atkinson A."/>
            <person name="Cooper R."/>
            <person name="Jones C."/>
            <person name="Hall R.E."/>
            <person name="Andrews T.D."/>
            <person name="Lloyd C."/>
            <person name="Ainscough R."/>
            <person name="Almeida J.P."/>
            <person name="Ambrose K.D."/>
            <person name="Anderson F."/>
            <person name="Andrew R.W."/>
            <person name="Ashwell R.I.S."/>
            <person name="Aubin K."/>
            <person name="Babbage A.K."/>
            <person name="Bagguley C.L."/>
            <person name="Bailey J."/>
            <person name="Beasley H."/>
            <person name="Bethel G."/>
            <person name="Bird C.P."/>
            <person name="Bray-Allen S."/>
            <person name="Brown J.Y."/>
            <person name="Brown A.J."/>
            <person name="Buckley D."/>
            <person name="Burton J."/>
            <person name="Bye J."/>
            <person name="Carder C."/>
            <person name="Chapman J.C."/>
            <person name="Clark S.Y."/>
            <person name="Clarke G."/>
            <person name="Clee C."/>
            <person name="Cobley V."/>
            <person name="Collier R.E."/>
            <person name="Corby N."/>
            <person name="Coville G.J."/>
            <person name="Davies J."/>
            <person name="Deadman R."/>
            <person name="Dunn M."/>
            <person name="Earthrowl M."/>
            <person name="Ellington A.G."/>
            <person name="Errington H."/>
            <person name="Frankish A."/>
            <person name="Frankland J."/>
            <person name="French L."/>
            <person name="Garner P."/>
            <person name="Garnett J."/>
            <person name="Gay L."/>
            <person name="Ghori M.R.J."/>
            <person name="Gibson R."/>
            <person name="Gilby L.M."/>
            <person name="Gillett W."/>
            <person name="Glithero R.J."/>
            <person name="Grafham D.V."/>
            <person name="Griffiths C."/>
            <person name="Griffiths-Jones S."/>
            <person name="Grocock R."/>
            <person name="Hammond S."/>
            <person name="Harrison E.S.I."/>
            <person name="Hart E."/>
            <person name="Haugen E."/>
            <person name="Heath P.D."/>
            <person name="Holmes S."/>
            <person name="Holt K."/>
            <person name="Howden P.J."/>
            <person name="Hunt A.R."/>
            <person name="Hunt S.E."/>
            <person name="Hunter G."/>
            <person name="Isherwood J."/>
            <person name="James R."/>
            <person name="Johnson C."/>
            <person name="Johnson D."/>
            <person name="Joy A."/>
            <person name="Kay M."/>
            <person name="Kershaw J.K."/>
            <person name="Kibukawa M."/>
            <person name="Kimberley A.M."/>
            <person name="King A."/>
            <person name="Knights A.J."/>
            <person name="Lad H."/>
            <person name="Laird G."/>
            <person name="Lawlor S."/>
            <person name="Leongamornlert D.A."/>
            <person name="Lloyd D.M."/>
            <person name="Loveland J."/>
            <person name="Lovell J."/>
            <person name="Lush M.J."/>
            <person name="Lyne R."/>
            <person name="Martin S."/>
            <person name="Mashreghi-Mohammadi M."/>
            <person name="Matthews L."/>
            <person name="Matthews N.S.W."/>
            <person name="McLaren S."/>
            <person name="Milne S."/>
            <person name="Mistry S."/>
            <person name="Moore M.J.F."/>
            <person name="Nickerson T."/>
            <person name="O'Dell C.N."/>
            <person name="Oliver K."/>
            <person name="Palmeiri A."/>
            <person name="Palmer S.A."/>
            <person name="Parker A."/>
            <person name="Patel D."/>
            <person name="Pearce A.V."/>
            <person name="Peck A.I."/>
            <person name="Pelan S."/>
            <person name="Phelps K."/>
            <person name="Phillimore B.J."/>
            <person name="Plumb R."/>
            <person name="Rajan J."/>
            <person name="Raymond C."/>
            <person name="Rouse G."/>
            <person name="Saenphimmachak C."/>
            <person name="Sehra H.K."/>
            <person name="Sheridan E."/>
            <person name="Shownkeen R."/>
            <person name="Sims S."/>
            <person name="Skuce C.D."/>
            <person name="Smith M."/>
            <person name="Steward C."/>
            <person name="Subramanian S."/>
            <person name="Sycamore N."/>
            <person name="Tracey A."/>
            <person name="Tromans A."/>
            <person name="Van Helmond Z."/>
            <person name="Wall M."/>
            <person name="Wallis J.M."/>
            <person name="White S."/>
            <person name="Whitehead S.L."/>
            <person name="Wilkinson J.E."/>
            <person name="Willey D.L."/>
            <person name="Williams H."/>
            <person name="Wilming L."/>
            <person name="Wray P.W."/>
            <person name="Wu Z."/>
            <person name="Coulson A."/>
            <person name="Vaudin M."/>
            <person name="Sulston J.E."/>
            <person name="Durbin R.M."/>
            <person name="Hubbard T."/>
            <person name="Wooster R."/>
            <person name="Dunham I."/>
            <person name="Carter N.P."/>
            <person name="McVean G."/>
            <person name="Ross M.T."/>
            <person name="Harrow J."/>
            <person name="Olson M.V."/>
            <person name="Beck S."/>
            <person name="Rogers J."/>
            <person name="Bentley D.R."/>
        </authorList>
    </citation>
    <scope>NUCLEOTIDE SEQUENCE [LARGE SCALE GENOMIC DNA]</scope>
</reference>
<reference key="7">
    <citation type="submission" date="2005-07" db="EMBL/GenBank/DDBJ databases">
        <authorList>
            <person name="Mural R.J."/>
            <person name="Istrail S."/>
            <person name="Sutton G."/>
            <person name="Florea L."/>
            <person name="Halpern A.L."/>
            <person name="Mobarry C.M."/>
            <person name="Lippert R."/>
            <person name="Walenz B."/>
            <person name="Shatkay H."/>
            <person name="Dew I."/>
            <person name="Miller J.R."/>
            <person name="Flanigan M.J."/>
            <person name="Edwards N.J."/>
            <person name="Bolanos R."/>
            <person name="Fasulo D."/>
            <person name="Halldorsson B.V."/>
            <person name="Hannenhalli S."/>
            <person name="Turner R."/>
            <person name="Yooseph S."/>
            <person name="Lu F."/>
            <person name="Nusskern D.R."/>
            <person name="Shue B.C."/>
            <person name="Zheng X.H."/>
            <person name="Zhong F."/>
            <person name="Delcher A.L."/>
            <person name="Huson D.H."/>
            <person name="Kravitz S.A."/>
            <person name="Mouchard L."/>
            <person name="Reinert K."/>
            <person name="Remington K.A."/>
            <person name="Clark A.G."/>
            <person name="Waterman M.S."/>
            <person name="Eichler E.E."/>
            <person name="Adams M.D."/>
            <person name="Hunkapiller M.W."/>
            <person name="Myers E.W."/>
            <person name="Venter J.C."/>
        </authorList>
    </citation>
    <scope>NUCLEOTIDE SEQUENCE [LARGE SCALE GENOMIC DNA]</scope>
</reference>
<reference key="8">
    <citation type="journal article" date="2004" name="Genome Res.">
        <title>The status, quality, and expansion of the NIH full-length cDNA project: the Mammalian Gene Collection (MGC).</title>
        <authorList>
            <consortium name="The MGC Project Team"/>
        </authorList>
    </citation>
    <scope>NUCLEOTIDE SEQUENCE [LARGE SCALE MRNA] (ISOFORM 1)</scope>
    <source>
        <tissue>Testis</tissue>
    </source>
</reference>
<reference key="9">
    <citation type="journal article" date="2004" name="Nature">
        <title>The ubiquitin ligase COP1 is a critical negative regulator of p53.</title>
        <authorList>
            <person name="Dornan D."/>
            <person name="Wertz I."/>
            <person name="Shimizu H."/>
            <person name="Arnott D."/>
            <person name="Frantz G.D."/>
            <person name="Dowd P."/>
            <person name="O'Rourke K."/>
            <person name="Koeppen H."/>
            <person name="Dixit V.M."/>
        </authorList>
    </citation>
    <scope>FUNCTION</scope>
    <scope>TISSUE SPECIFICITY</scope>
    <scope>INDUCTION</scope>
    <scope>INTERACTION WITH TP53</scope>
</reference>
<reference key="10">
    <citation type="journal article" date="2008" name="Oncogene">
        <title>COP1D, an alternatively spliced constitutive photomorphogenic-1 (COP1) product, stabilizes UV stress-induced c-Jun through inhibition of full-length COP1.</title>
        <authorList>
            <person name="Savio M.G."/>
            <person name="Rotondo G."/>
            <person name="Maglie S."/>
            <person name="Rossetti G."/>
            <person name="Bender J.R."/>
            <person name="Pardi R."/>
        </authorList>
    </citation>
    <scope>ALTERNATIVE SPLICING (ISOFORM 4)</scope>
    <scope>SUBUNIT</scope>
</reference>
<reference key="11">
    <citation type="journal article" date="2009" name="J. Biol. Chem.">
        <title>MTA1 coregulator regulates p53 stability and function.</title>
        <authorList>
            <person name="Li D.Q."/>
            <person name="Divijendra Natha Reddy S."/>
            <person name="Pakala S.B."/>
            <person name="Wu X."/>
            <person name="Zhang Y."/>
            <person name="Rayala S.K."/>
            <person name="Kumar R."/>
        </authorList>
    </citation>
    <scope>FUNCTION</scope>
    <scope>INTERACTION WITH TP53</scope>
</reference>
<reference key="12">
    <citation type="journal article" date="2009" name="Proc. Natl. Acad. Sci. U.S.A.">
        <title>E3 ubiquitin ligase COP1 regulates the stability and functions of MTA1.</title>
        <authorList>
            <person name="Li D.Q."/>
            <person name="Ohshiro K."/>
            <person name="Reddy S.D."/>
            <person name="Pakala S.B."/>
            <person name="Lee M.H."/>
            <person name="Zhang Y."/>
            <person name="Rayala S.K."/>
            <person name="Kumar R."/>
        </authorList>
    </citation>
    <scope>FUNCTION</scope>
    <scope>INTERACTION WITH MTA1</scope>
    <scope>MUTAGENESIS OF CYS-136; CYS-139; CYS-156 AND CYS-159</scope>
    <scope>AUTOUBIQUITINATION</scope>
</reference>
<reference key="13">
    <citation type="journal article" date="2010" name="Blood">
        <title>Differential ability of Tribbles family members to promote degradation of C/EBPalpha and induce acute myelogenous leukemia.</title>
        <authorList>
            <person name="Dedhia P.H."/>
            <person name="Keeshan K."/>
            <person name="Uljon S."/>
            <person name="Xu L."/>
            <person name="Vega M.E."/>
            <person name="Shestova O."/>
            <person name="Zaks-Zilberman M."/>
            <person name="Romany C."/>
            <person name="Blacklow S.C."/>
            <person name="Pear W.S."/>
        </authorList>
    </citation>
    <scope>INTERACTION WITH TRIB1</scope>
</reference>
<reference key="14">
    <citation type="journal article" date="2011" name="Oncogene">
        <title>COP9 signalosome subunit 6 stabilizes COP1, which functions as an E3 ubiquitin ligase for 14-3-3sigma.</title>
        <authorList>
            <person name="Choi H.H."/>
            <person name="Gully C."/>
            <person name="Su C.H."/>
            <person name="Velazquez-Torres G."/>
            <person name="Chou P.C."/>
            <person name="Tseng C."/>
            <person name="Zhao R."/>
            <person name="Phan L."/>
            <person name="Shaiken T."/>
            <person name="Chen J."/>
            <person name="Yeung S.C."/>
            <person name="Lee M.H."/>
        </authorList>
    </citation>
    <scope>FUNCTION</scope>
    <scope>INTERACTION WITH COPS6 AND SFN</scope>
    <scope>MUTAGENESIS OF CYS-136 AND CYS-139</scope>
</reference>
<reference evidence="23 24" key="15">
    <citation type="journal article" date="2016" name="Structure">
        <title>Structural basis for substrate selectivity of the E3 ligase COP1.</title>
        <authorList>
            <person name="Uljon S."/>
            <person name="Xu X."/>
            <person name="Durzynska I."/>
            <person name="Stein S."/>
            <person name="Adelmant G."/>
            <person name="Marto J.A."/>
            <person name="Pear W.S."/>
            <person name="Blacklow S.C."/>
        </authorList>
    </citation>
    <scope>X-RAY CRYSTALLOGRAPHY (2.00 ANGSTROMS) OF 376-731 ALONE OR IN COMPLEX WITH A TRIB1 PEPTIDE</scope>
    <scope>FUNCTION</scope>
    <scope>DOMAIN</scope>
    <scope>INTERACTION WITH TRIB1 AND TRIB2</scope>
    <scope>ACTIVITY REGULATION</scope>
</reference>
<feature type="chain" id="PRO_0000055879" description="E3 ubiquitin-protein ligase COP1">
    <location>
        <begin position="1"/>
        <end position="731"/>
    </location>
</feature>
<feature type="repeat" description="WD 1">
    <location>
        <begin position="419"/>
        <end position="458"/>
    </location>
</feature>
<feature type="repeat" description="WD 2">
    <location>
        <begin position="468"/>
        <end position="508"/>
    </location>
</feature>
<feature type="repeat" description="WD 3">
    <location>
        <begin position="511"/>
        <end position="551"/>
    </location>
</feature>
<feature type="repeat" description="WD 4">
    <location>
        <begin position="553"/>
        <end position="593"/>
    </location>
</feature>
<feature type="repeat" description="WD 5">
    <location>
        <begin position="597"/>
        <end position="635"/>
    </location>
</feature>
<feature type="repeat" description="WD 6">
    <location>
        <begin position="638"/>
        <end position="677"/>
    </location>
</feature>
<feature type="repeat" description="WD 7">
    <location>
        <begin position="691"/>
        <end position="729"/>
    </location>
</feature>
<feature type="zinc finger region" description="RING-type" evidence="4">
    <location>
        <begin position="136"/>
        <end position="174"/>
    </location>
</feature>
<feature type="region of interest" description="Disordered" evidence="5">
    <location>
        <begin position="1"/>
        <end position="40"/>
    </location>
</feature>
<feature type="region of interest" description="Disordered" evidence="5">
    <location>
        <begin position="305"/>
        <end position="325"/>
    </location>
</feature>
<feature type="region of interest" description="Interaction with TRIB1" evidence="15">
    <location>
        <begin position="643"/>
        <end position="645"/>
    </location>
</feature>
<feature type="coiled-coil region" evidence="3">
    <location>
        <begin position="233"/>
        <end position="301"/>
    </location>
</feature>
<feature type="short sequence motif" description="Nuclear localization signal 1">
    <location>
        <begin position="109"/>
        <end position="113"/>
    </location>
</feature>
<feature type="short sequence motif" description="Nuclear localization signal 2">
    <location>
        <begin position="195"/>
        <end position="206"/>
    </location>
</feature>
<feature type="short sequence motif" description="Nuclear export signal" evidence="1">
    <location>
        <begin position="235"/>
        <end position="245"/>
    </location>
</feature>
<feature type="site" description="Interaction with TRIB1" evidence="15">
    <location>
        <position position="472"/>
    </location>
</feature>
<feature type="site" description="Interaction with TRIB1" evidence="15">
    <location>
        <position position="491"/>
    </location>
</feature>
<feature type="splice variant" id="VSP_012026" description="In isoform 3." evidence="17">
    <location>
        <begin position="1"/>
        <end position="264"/>
    </location>
</feature>
<feature type="splice variant" id="VSP_055894" description="In isoform 5." evidence="19">
    <original>Y</original>
    <variation>E</variation>
    <location>
        <position position="157"/>
    </location>
</feature>
<feature type="splice variant" id="VSP_055895" description="In isoform 5." evidence="19">
    <location>
        <begin position="158"/>
        <end position="731"/>
    </location>
</feature>
<feature type="splice variant" id="VSP_012024" description="In isoform 2." evidence="18">
    <location>
        <begin position="211"/>
        <end position="214"/>
    </location>
</feature>
<feature type="splice variant" id="VSP_012025" description="In isoform 2 and isoform 4." evidence="18">
    <location>
        <begin position="277"/>
        <end position="296"/>
    </location>
</feature>
<feature type="splice variant" id="VSP_012027" description="In isoform 3." evidence="17">
    <original>Q</original>
    <variation>QAGVQWRYLGSLQPPPPRYKRFSCLTLPSSWDYRRLPPHL</variation>
    <location>
        <position position="342"/>
    </location>
</feature>
<feature type="mutagenesis site" description="Abolishes localization to the nucleus." evidence="7">
    <original>RKR</original>
    <variation>AKA</variation>
    <location>
        <begin position="111"/>
        <end position="113"/>
    </location>
</feature>
<feature type="mutagenesis site" description="Abolishes p53 ubiquitination and degradation but not that of JUN; when associated with A-139." evidence="7 8 11 14">
    <original>C</original>
    <variation>A</variation>
    <location>
        <position position="136"/>
    </location>
</feature>
<feature type="mutagenesis site" description="Loss of SFN and MTA1 ubiquitination and degradation; when associated with S-139. Loss of stabilization by COPS6; when associated with S-139." evidence="7 8 11 14">
    <original>C</original>
    <variation>S</variation>
    <location>
        <position position="136"/>
    </location>
</feature>
<feature type="mutagenesis site" description="Abolishes p53 ubiquitination and degradation but not that of JUN; when associated with A-136." evidence="7 8 11 14">
    <original>C</original>
    <variation>A</variation>
    <location>
        <position position="139"/>
    </location>
</feature>
<feature type="mutagenesis site" description="Loss of SFN and MTA1 ubiquitination and degradation; when associated with S-136. Loss of stabilization by COPS6; when associated with S-136." evidence="7 8 11 14">
    <original>C</original>
    <variation>S</variation>
    <location>
        <position position="139"/>
    </location>
</feature>
<feature type="mutagenesis site" description="Loss of MTA1 ubiquitination and degradation; when associated with S-159." evidence="11">
    <original>C</original>
    <variation>S</variation>
    <location>
        <position position="156"/>
    </location>
</feature>
<feature type="mutagenesis site" description="Loss of MTA1 ubiquitination and degradation; when associated with S-156." evidence="11">
    <original>C</original>
    <variation>S</variation>
    <location>
        <position position="159"/>
    </location>
</feature>
<feature type="helix" evidence="25">
    <location>
        <begin position="392"/>
        <end position="399"/>
    </location>
</feature>
<feature type="strand" evidence="25">
    <location>
        <begin position="404"/>
        <end position="412"/>
    </location>
</feature>
<feature type="strand" evidence="25">
    <location>
        <begin position="424"/>
        <end position="429"/>
    </location>
</feature>
<feature type="strand" evidence="25">
    <location>
        <begin position="433"/>
        <end position="440"/>
    </location>
</feature>
<feature type="strand" evidence="25">
    <location>
        <begin position="443"/>
        <end position="449"/>
    </location>
</feature>
<feature type="helix" evidence="25">
    <location>
        <begin position="450"/>
        <end position="453"/>
    </location>
</feature>
<feature type="strand" evidence="25">
    <location>
        <begin position="464"/>
        <end position="468"/>
    </location>
</feature>
<feature type="strand" evidence="25">
    <location>
        <begin position="473"/>
        <end position="478"/>
    </location>
</feature>
<feature type="strand" evidence="25">
    <location>
        <begin position="485"/>
        <end position="490"/>
    </location>
</feature>
<feature type="strand" evidence="25">
    <location>
        <begin position="495"/>
        <end position="499"/>
    </location>
</feature>
<feature type="turn" evidence="25">
    <location>
        <begin position="500"/>
        <end position="502"/>
    </location>
</feature>
<feature type="strand" evidence="25">
    <location>
        <begin position="505"/>
        <end position="509"/>
    </location>
</feature>
<feature type="strand" evidence="25">
    <location>
        <begin position="516"/>
        <end position="521"/>
    </location>
</feature>
<feature type="strand" evidence="25">
    <location>
        <begin position="528"/>
        <end position="533"/>
    </location>
</feature>
<feature type="strand" evidence="25">
    <location>
        <begin position="536"/>
        <end position="542"/>
    </location>
</feature>
<feature type="strand" evidence="25">
    <location>
        <begin position="549"/>
        <end position="553"/>
    </location>
</feature>
<feature type="strand" evidence="25">
    <location>
        <begin position="558"/>
        <end position="563"/>
    </location>
</feature>
<feature type="strand" evidence="25">
    <location>
        <begin position="570"/>
        <end position="575"/>
    </location>
</feature>
<feature type="strand" evidence="25">
    <location>
        <begin position="580"/>
        <end position="584"/>
    </location>
</feature>
<feature type="strand" evidence="25">
    <location>
        <begin position="592"/>
        <end position="595"/>
    </location>
</feature>
<feature type="strand" evidence="25">
    <location>
        <begin position="602"/>
        <end position="617"/>
    </location>
</feature>
<feature type="turn" evidence="25">
    <location>
        <begin position="618"/>
        <end position="620"/>
    </location>
</feature>
<feature type="strand" evidence="25">
    <location>
        <begin position="621"/>
        <end position="626"/>
    </location>
</feature>
<feature type="strand" evidence="25">
    <location>
        <begin position="633"/>
        <end position="636"/>
    </location>
</feature>
<feature type="strand" evidence="25">
    <location>
        <begin position="642"/>
        <end position="644"/>
    </location>
</feature>
<feature type="strand" evidence="25">
    <location>
        <begin position="648"/>
        <end position="651"/>
    </location>
</feature>
<feature type="strand" evidence="25">
    <location>
        <begin position="654"/>
        <end position="658"/>
    </location>
</feature>
<feature type="strand" evidence="25">
    <location>
        <begin position="662"/>
        <end position="668"/>
    </location>
</feature>
<feature type="strand" evidence="25">
    <location>
        <begin position="676"/>
        <end position="679"/>
    </location>
</feature>
<feature type="strand" evidence="25">
    <location>
        <begin position="700"/>
        <end position="705"/>
    </location>
</feature>
<feature type="strand" evidence="25">
    <location>
        <begin position="709"/>
        <end position="711"/>
    </location>
</feature>
<feature type="strand" evidence="25">
    <location>
        <begin position="715"/>
        <end position="720"/>
    </location>
</feature>
<feature type="strand" evidence="25">
    <location>
        <begin position="723"/>
        <end position="731"/>
    </location>
</feature>
<evidence type="ECO:0000250" key="1"/>
<evidence type="ECO:0000250" key="2">
    <source>
        <dbReference type="UniProtKB" id="Q9R1A8"/>
    </source>
</evidence>
<evidence type="ECO:0000255" key="3"/>
<evidence type="ECO:0000255" key="4">
    <source>
        <dbReference type="PROSITE-ProRule" id="PRU00175"/>
    </source>
</evidence>
<evidence type="ECO:0000256" key="5">
    <source>
        <dbReference type="SAM" id="MobiDB-lite"/>
    </source>
</evidence>
<evidence type="ECO:0000269" key="6">
    <source>
    </source>
</evidence>
<evidence type="ECO:0000269" key="7">
    <source>
    </source>
</evidence>
<evidence type="ECO:0000269" key="8">
    <source>
    </source>
</evidence>
<evidence type="ECO:0000269" key="9">
    <source>
    </source>
</evidence>
<evidence type="ECO:0000269" key="10">
    <source>
    </source>
</evidence>
<evidence type="ECO:0000269" key="11">
    <source>
    </source>
</evidence>
<evidence type="ECO:0000269" key="12">
    <source>
    </source>
</evidence>
<evidence type="ECO:0000269" key="13">
    <source>
    </source>
</evidence>
<evidence type="ECO:0000269" key="14">
    <source>
    </source>
</evidence>
<evidence type="ECO:0000269" key="15">
    <source>
    </source>
</evidence>
<evidence type="ECO:0000303" key="16">
    <source>
    </source>
</evidence>
<evidence type="ECO:0000303" key="17">
    <source>
    </source>
</evidence>
<evidence type="ECO:0000303" key="18">
    <source>
    </source>
</evidence>
<evidence type="ECO:0000303" key="19">
    <source>
    </source>
</evidence>
<evidence type="ECO:0000303" key="20">
    <source>
    </source>
</evidence>
<evidence type="ECO:0000305" key="21"/>
<evidence type="ECO:0000312" key="22">
    <source>
        <dbReference type="HGNC" id="HGNC:17440"/>
    </source>
</evidence>
<evidence type="ECO:0007744" key="23">
    <source>
        <dbReference type="PDB" id="5HQG"/>
    </source>
</evidence>
<evidence type="ECO:0007744" key="24">
    <source>
        <dbReference type="PDB" id="5IGQ"/>
    </source>
</evidence>
<evidence type="ECO:0007829" key="25">
    <source>
        <dbReference type="PDB" id="5HQG"/>
    </source>
</evidence>
<accession>Q8NHY2</accession>
<accession>E9PKI0</accession>
<accession>Q504W6</accession>
<accession>Q6H103</accession>
<accession>Q9H6L7</accession>
<accession>X5D9B4</accession>
<gene>
    <name evidence="22" type="primary">COP1</name>
    <name evidence="22" type="synonym">RFWD2</name>
    <name type="synonym">RNF200</name>
</gene>
<proteinExistence type="evidence at protein level"/>
<name>COP1_HUMAN</name>
<organism>
    <name type="scientific">Homo sapiens</name>
    <name type="common">Human</name>
    <dbReference type="NCBI Taxonomy" id="9606"/>
    <lineage>
        <taxon>Eukaryota</taxon>
        <taxon>Metazoa</taxon>
        <taxon>Chordata</taxon>
        <taxon>Craniata</taxon>
        <taxon>Vertebrata</taxon>
        <taxon>Euteleostomi</taxon>
        <taxon>Mammalia</taxon>
        <taxon>Eutheria</taxon>
        <taxon>Euarchontoglires</taxon>
        <taxon>Primates</taxon>
        <taxon>Haplorrhini</taxon>
        <taxon>Catarrhini</taxon>
        <taxon>Hominidae</taxon>
        <taxon>Homo</taxon>
    </lineage>
</organism>
<comment type="function">
    <text evidence="6 7 8 9 11 12 14 20">E3 ubiquitin-protein ligase that mediates ubiquitination and subsequent proteasomal degradation of target proteins. E3 ubiquitin ligases accept ubiquitin from an E2 ubiquitin-conjugating enzyme in the form of a thioester and then directly transfers the ubiquitin to targeted substrates. Involved in JUN ubiquitination and degradation. Directly involved in p53 (TP53) ubiquitination and degradation, thereby abolishing p53-dependent transcription and apoptosis. Ubiquitinates p53 independently of MDM2 or RCHY1. Probably mediates E3 ubiquitin ligase activity by functioning as the essential RING domain subunit of larger E3 complexes. In contrast, it does not constitute the catalytic RING subunit in the DCX DET1-COP1 complex that negatively regulates JUN, the ubiquitin ligase activity being mediated by RBX1. Involved in 14-3-3 protein sigma/SFN ubiquitination and proteasomal degradation, leading to AKT activation and promotion of cell survival. Ubiquitinates MTA1 leading to its proteasomal degradation. Upon binding to TRIB1, ubiquitinates CEBPA, which lacks a canonical COP1-binding motif (Probable).</text>
</comment>
<comment type="catalytic activity">
    <reaction evidence="7">
        <text>S-ubiquitinyl-[E2 ubiquitin-conjugating enzyme]-L-cysteine + [acceptor protein]-L-lysine = [E2 ubiquitin-conjugating enzyme]-L-cysteine + N(6)-ubiquitinyl-[acceptor protein]-L-lysine.</text>
        <dbReference type="EC" id="2.3.2.27"/>
    </reaction>
</comment>
<comment type="activity regulation">
    <text evidence="15">TRIB1 competes with substrates for RFWD2 binding.</text>
</comment>
<comment type="pathway">
    <text>Protein modification; protein ubiquitination.</text>
</comment>
<comment type="subunit">
    <text evidence="7 9 10 11 12 13 14 15">Homodimer. Homodimerization is mediated by the coiled coil domain. Component of the DCX DET1-COP1 ubiquitin ligase complex at least composed of RBX1, DET1, DDB1, CUL4A and COP1. Isoform 2 does not interact with CUL4A but still binds to RBX1, suggesting that the interaction may be mediated by another cullin protein. Isoform 1 and isoform 2 interact with CUL5 but not with CUL1, CUL2 not CUL3. Interacts with bZIP transcription factors JUN, JUNB and JUND but not with FOS, ATF2 nor XBP1. Interacts with p53 (TP53). Interacts with COPS6; this interaction stabilizes RFWD2 through reducing its auto-ubiquitination and decelerating its turnover rate. Interacts with SFN; this interaction leads to SFN degradation. Isoform 4 forms heterodimers with isoform 1, preventing its association with DET1. Interacts with p53/TP53 and MTA1. Interacts with TRIB1 (via C-terminus) and TRIB2 (PubMed:20410507, PubMed:27041596).</text>
</comment>
<comment type="interaction">
    <interactant intactId="EBI-1176214">
        <id>Q8NHY2</id>
    </interactant>
    <interactant intactId="EBI-486838">
        <id>Q7L5N1</id>
        <label>COPS6</label>
    </interactant>
    <organismsDiffer>false</organismsDiffer>
    <experiments>3</experiments>
</comment>
<comment type="interaction">
    <interactant intactId="EBI-1176214">
        <id>Q8NHY2</id>
    </interactant>
    <interactant intactId="EBI-913224">
        <id>P14921-1</id>
        <label>ETS1</label>
    </interactant>
    <organismsDiffer>false</organismsDiffer>
    <experiments>3</experiments>
</comment>
<comment type="interaction">
    <interactant intactId="EBI-1176214">
        <id>Q8NHY2</id>
    </interactant>
    <interactant intactId="EBI-1646991">
        <id>P15036</id>
        <label>ETS2</label>
    </interactant>
    <organismsDiffer>false</organismsDiffer>
    <experiments>2</experiments>
</comment>
<comment type="interaction">
    <interactant intactId="EBI-1176214">
        <id>Q8NHY2</id>
    </interactant>
    <interactant intactId="EBI-3905068">
        <id>P50549</id>
        <label>ETV1</label>
    </interactant>
    <organismsDiffer>false</organismsDiffer>
    <experiments>4</experiments>
</comment>
<comment type="interaction">
    <interactant intactId="EBI-1176214">
        <id>Q8NHY2</id>
    </interactant>
    <interactant intactId="EBI-3905093">
        <id>P41161</id>
        <label>ETV5</label>
    </interactant>
    <organismsDiffer>false</organismsDiffer>
    <experiments>4</experiments>
</comment>
<comment type="interaction">
    <interactant intactId="EBI-1176214">
        <id>Q8NHY2</id>
    </interactant>
    <interactant intactId="EBI-476295">
        <id>P31947</id>
        <label>SFN</label>
    </interactant>
    <organismsDiffer>false</organismsDiffer>
    <experiments>6</experiments>
</comment>
<comment type="interaction">
    <interactant intactId="EBI-9698228">
        <id>Q8NHY2-1</id>
    </interactant>
    <interactant intactId="EBI-15926557">
        <id>P50549-1</id>
        <label>ETV1</label>
    </interactant>
    <organismsDiffer>false</organismsDiffer>
    <experiments>2</experiments>
</comment>
<comment type="subcellular location">
    <subcellularLocation>
        <location>Nucleus speckle</location>
    </subcellularLocation>
    <subcellularLocation>
        <location>Cytoplasm</location>
    </subcellularLocation>
    <text>In the nucleus, it forms nuclear speckles.</text>
</comment>
<comment type="alternative products">
    <event type="alternative splicing"/>
    <isoform>
        <id>Q8NHY2-1</id>
        <name>1</name>
        <sequence type="displayed"/>
    </isoform>
    <isoform>
        <id>Q8NHY2-2</id>
        <name>2</name>
        <name>delta24</name>
        <sequence type="described" ref="VSP_012024 VSP_012025"/>
    </isoform>
    <isoform>
        <id>Q8NHY2-3</id>
        <name>3</name>
        <sequence type="described" ref="VSP_012026 VSP_012027"/>
    </isoform>
    <isoform>
        <id>Q8NHY2-4</id>
        <name>4</name>
        <name>COP1D</name>
        <sequence type="described" ref="VSP_012025"/>
    </isoform>
    <isoform>
        <id>Q8NHY2-5</id>
        <name>5</name>
        <name>E</name>
        <sequence type="described" ref="VSP_055894 VSP_055895"/>
    </isoform>
</comment>
<comment type="tissue specificity">
    <text evidence="7 9">Ubiquitously expressed at low level. Expressed at higher level in testis, placenta, skeletal muscle and heart.</text>
</comment>
<comment type="induction">
    <text evidence="9">By p53/TP53.</text>
</comment>
<comment type="domain">
    <text evidence="2">The RING finger domain, in addition to its role in ubiquitination, functions as a structural scaffold to bring two clusters of positive-charged residues within spatial proximity to mimic a bipartite nuclear localization signal (NLS) (By similarity).</text>
</comment>
<comment type="domain">
    <text evidence="15">The WD40 domain (386-731) is necessary and sufficient for TRIB1 binding (PubMed:27041596).</text>
</comment>
<comment type="PTM">
    <text evidence="11">Autoubiquitinated. MTA1 destabilizes it by promoting its autoubiquitination.</text>
</comment>
<comment type="miscellaneous">
    <molecule>Isoform 4</molecule>
    <text evidence="21">Unable to associate with other components of the CRL complex. Acts as a dominant-negative.</text>
</comment>
<comment type="similarity">
    <text evidence="21">Belongs to the COP1 family.</text>
</comment>
<keyword id="KW-0002">3D-structure</keyword>
<keyword id="KW-0025">Alternative splicing</keyword>
<keyword id="KW-0175">Coiled coil</keyword>
<keyword id="KW-0963">Cytoplasm</keyword>
<keyword id="KW-0479">Metal-binding</keyword>
<keyword id="KW-0539">Nucleus</keyword>
<keyword id="KW-1267">Proteomics identification</keyword>
<keyword id="KW-1185">Reference proteome</keyword>
<keyword id="KW-0677">Repeat</keyword>
<keyword id="KW-0808">Transferase</keyword>
<keyword id="KW-0832">Ubl conjugation</keyword>
<keyword id="KW-0833">Ubl conjugation pathway</keyword>
<keyword id="KW-0853">WD repeat</keyword>
<keyword id="KW-0862">Zinc</keyword>
<keyword id="KW-0863">Zinc-finger</keyword>
<protein>
    <recommendedName>
        <fullName evidence="21">E3 ubiquitin-protein ligase COP1</fullName>
        <ecNumber evidence="7">2.3.2.27</ecNumber>
    </recommendedName>
    <alternativeName>
        <fullName evidence="16">Constitutive photomorphogenesis protein 1 homolog</fullName>
        <shortName evidence="16">hCOP1</shortName>
    </alternativeName>
    <alternativeName>
        <fullName evidence="21">RING finger and WD repeat domain protein 2</fullName>
    </alternativeName>
    <alternativeName>
        <fullName>RING finger protein 200</fullName>
    </alternativeName>
    <alternativeName>
        <fullName evidence="21">RING-type E3 ubiquitin transferase RFWD2</fullName>
    </alternativeName>
</protein>
<dbReference type="EC" id="2.3.2.27" evidence="7"/>
<dbReference type="EMBL" id="AF508940">
    <property type="protein sequence ID" value="AAM34692.1"/>
    <property type="molecule type" value="mRNA"/>
</dbReference>
<dbReference type="EMBL" id="BK000438">
    <property type="protein sequence ID" value="DAA01050.1"/>
    <property type="molecule type" value="Genomic_DNA"/>
</dbReference>
<dbReference type="EMBL" id="AF527539">
    <property type="protein sequence ID" value="AAQ08989.1"/>
    <property type="molecule type" value="mRNA"/>
</dbReference>
<dbReference type="EMBL" id="AY509921">
    <property type="protein sequence ID" value="AAS82851.1"/>
    <property type="molecule type" value="mRNA"/>
</dbReference>
<dbReference type="EMBL" id="KJ534928">
    <property type="protein sequence ID" value="AHW56568.1"/>
    <property type="molecule type" value="mRNA"/>
</dbReference>
<dbReference type="EMBL" id="KJ535076">
    <property type="protein sequence ID" value="AHW56715.1"/>
    <property type="molecule type" value="mRNA"/>
</dbReference>
<dbReference type="EMBL" id="AK025789">
    <property type="protein sequence ID" value="BAB15239.1"/>
    <property type="molecule type" value="mRNA"/>
</dbReference>
<dbReference type="EMBL" id="AK314750">
    <property type="protein sequence ID" value="BAG37289.1"/>
    <property type="molecule type" value="mRNA"/>
</dbReference>
<dbReference type="EMBL" id="AL162736">
    <property type="status" value="NOT_ANNOTATED_CDS"/>
    <property type="molecule type" value="Genomic_DNA"/>
</dbReference>
<dbReference type="EMBL" id="AL359265">
    <property type="status" value="NOT_ANNOTATED_CDS"/>
    <property type="molecule type" value="Genomic_DNA"/>
</dbReference>
<dbReference type="EMBL" id="AL513329">
    <property type="status" value="NOT_ANNOTATED_CDS"/>
    <property type="molecule type" value="Genomic_DNA"/>
</dbReference>
<dbReference type="EMBL" id="AL590723">
    <property type="status" value="NOT_ANNOTATED_CDS"/>
    <property type="molecule type" value="Genomic_DNA"/>
</dbReference>
<dbReference type="EMBL" id="CH471067">
    <property type="protein sequence ID" value="EAW91000.1"/>
    <property type="molecule type" value="Genomic_DNA"/>
</dbReference>
<dbReference type="EMBL" id="BC094728">
    <property type="protein sequence ID" value="AAH94728.1"/>
    <property type="molecule type" value="mRNA"/>
</dbReference>
<dbReference type="CCDS" id="CCDS30944.1">
    <molecule id="Q8NHY2-1"/>
</dbReference>
<dbReference type="CCDS" id="CCDS44279.1">
    <molecule id="Q8NHY2-2"/>
</dbReference>
<dbReference type="RefSeq" id="NP_001001740.1">
    <molecule id="Q8NHY2-2"/>
    <property type="nucleotide sequence ID" value="NM_001001740.4"/>
</dbReference>
<dbReference type="RefSeq" id="NP_001273573.1">
    <property type="nucleotide sequence ID" value="NM_001286644.1"/>
</dbReference>
<dbReference type="RefSeq" id="NP_071902.2">
    <molecule id="Q8NHY2-1"/>
    <property type="nucleotide sequence ID" value="NM_022457.6"/>
</dbReference>
<dbReference type="RefSeq" id="XP_005245505.1">
    <molecule id="Q8NHY2-4"/>
    <property type="nucleotide sequence ID" value="XM_005245448.4"/>
</dbReference>
<dbReference type="RefSeq" id="XP_054194172.1">
    <molecule id="Q8NHY2-4"/>
    <property type="nucleotide sequence ID" value="XM_054338197.1"/>
</dbReference>
<dbReference type="PDB" id="5HQG">
    <property type="method" value="X-ray"/>
    <property type="resolution" value="2.00 A"/>
    <property type="chains" value="A=376-731"/>
</dbReference>
<dbReference type="PDB" id="5IGQ">
    <property type="method" value="X-ray"/>
    <property type="resolution" value="3.90 A"/>
    <property type="chains" value="A/B/C/D/E/F=386-731"/>
</dbReference>
<dbReference type="PDBsum" id="5HQG"/>
<dbReference type="PDBsum" id="5IGQ"/>
<dbReference type="SMR" id="Q8NHY2"/>
<dbReference type="BioGRID" id="122136">
    <property type="interactions" value="331"/>
</dbReference>
<dbReference type="CORUM" id="Q8NHY2"/>
<dbReference type="DIP" id="DIP-36661N"/>
<dbReference type="ELM" id="Q8NHY2"/>
<dbReference type="FunCoup" id="Q8NHY2">
    <property type="interactions" value="2585"/>
</dbReference>
<dbReference type="IntAct" id="Q8NHY2">
    <property type="interactions" value="85"/>
</dbReference>
<dbReference type="MINT" id="Q8NHY2"/>
<dbReference type="STRING" id="9606.ENSP00000356641"/>
<dbReference type="ChEMBL" id="CHEMBL5465335"/>
<dbReference type="GlyGen" id="Q8NHY2">
    <property type="glycosylation" value="2 sites, 1 N-linked glycan (1 site), 1 O-linked glycan (1 site)"/>
</dbReference>
<dbReference type="iPTMnet" id="Q8NHY2"/>
<dbReference type="PhosphoSitePlus" id="Q8NHY2"/>
<dbReference type="BioMuta" id="RFWD2"/>
<dbReference type="DMDM" id="55976539"/>
<dbReference type="jPOST" id="Q8NHY2"/>
<dbReference type="MassIVE" id="Q8NHY2"/>
<dbReference type="PaxDb" id="9606-ENSP00000356641"/>
<dbReference type="PeptideAtlas" id="Q8NHY2"/>
<dbReference type="ProteomicsDB" id="21473"/>
<dbReference type="ProteomicsDB" id="73785">
    <molecule id="Q8NHY2-1"/>
</dbReference>
<dbReference type="ProteomicsDB" id="73786">
    <molecule id="Q8NHY2-2"/>
</dbReference>
<dbReference type="ProteomicsDB" id="73787">
    <molecule id="Q8NHY2-3"/>
</dbReference>
<dbReference type="Pumba" id="Q8NHY2"/>
<dbReference type="Antibodypedia" id="34406">
    <property type="antibodies" value="246 antibodies from 30 providers"/>
</dbReference>
<dbReference type="DNASU" id="64326"/>
<dbReference type="Ensembl" id="ENST00000308769.12">
    <molecule id="Q8NHY2-2"/>
    <property type="protein sequence ID" value="ENSP00000310943.8"/>
    <property type="gene ID" value="ENSG00000143207.21"/>
</dbReference>
<dbReference type="Ensembl" id="ENST00000367669.8">
    <molecule id="Q8NHY2-1"/>
    <property type="protein sequence ID" value="ENSP00000356641.3"/>
    <property type="gene ID" value="ENSG00000143207.21"/>
</dbReference>
<dbReference type="Ensembl" id="ENST00000474194.1">
    <molecule id="Q8NHY2-5"/>
    <property type="protein sequence ID" value="ENSP00000433517.1"/>
    <property type="gene ID" value="ENSG00000143207.21"/>
</dbReference>
<dbReference type="GeneID" id="64326"/>
<dbReference type="KEGG" id="hsa:64326"/>
<dbReference type="MANE-Select" id="ENST00000367669.8">
    <property type="protein sequence ID" value="ENSP00000356641.3"/>
    <property type="RefSeq nucleotide sequence ID" value="NM_022457.7"/>
    <property type="RefSeq protein sequence ID" value="NP_071902.2"/>
</dbReference>
<dbReference type="UCSC" id="uc001gku.3">
    <molecule id="Q8NHY2-1"/>
    <property type="organism name" value="human"/>
</dbReference>
<dbReference type="AGR" id="HGNC:17440"/>
<dbReference type="CTD" id="64326"/>
<dbReference type="DisGeNET" id="64326"/>
<dbReference type="GeneCards" id="COP1"/>
<dbReference type="HGNC" id="HGNC:17440">
    <property type="gene designation" value="COP1"/>
</dbReference>
<dbReference type="HPA" id="ENSG00000143207">
    <property type="expression patterns" value="Low tissue specificity"/>
</dbReference>
<dbReference type="MalaCards" id="COP1"/>
<dbReference type="MIM" id="608067">
    <property type="type" value="gene"/>
</dbReference>
<dbReference type="neXtProt" id="NX_Q8NHY2"/>
<dbReference type="OpenTargets" id="ENSG00000143207"/>
<dbReference type="PharmGKB" id="PA134952161"/>
<dbReference type="VEuPathDB" id="HostDB:ENSG00000143207"/>
<dbReference type="eggNOG" id="ENOG502QQ8V">
    <property type="taxonomic scope" value="Eukaryota"/>
</dbReference>
<dbReference type="GeneTree" id="ENSGT00920000149161"/>
<dbReference type="HOGENOM" id="CLU_1677257_0_0_1"/>
<dbReference type="InParanoid" id="Q8NHY2"/>
<dbReference type="OMA" id="CWRQMSN"/>
<dbReference type="OrthoDB" id="273771at2759"/>
<dbReference type="PAN-GO" id="Q8NHY2">
    <property type="GO annotations" value="2 GO annotations based on evolutionary models"/>
</dbReference>
<dbReference type="PhylomeDB" id="Q8NHY2"/>
<dbReference type="TreeFam" id="TF328912"/>
<dbReference type="PathwayCommons" id="Q8NHY2"/>
<dbReference type="Reactome" id="R-HSA-349425">
    <property type="pathway name" value="Autodegradation of the E3 ubiquitin ligase COP1"/>
</dbReference>
<dbReference type="Reactome" id="R-HSA-8951664">
    <property type="pathway name" value="Neddylation"/>
</dbReference>
<dbReference type="SignaLink" id="Q8NHY2"/>
<dbReference type="SIGNOR" id="Q8NHY2"/>
<dbReference type="UniPathway" id="UPA00143"/>
<dbReference type="BioGRID-ORCS" id="64326">
    <property type="hits" value="183 hits in 1217 CRISPR screens"/>
</dbReference>
<dbReference type="ChiTaRS" id="RFWD2">
    <property type="organism name" value="human"/>
</dbReference>
<dbReference type="EvolutionaryTrace" id="Q8NHY2"/>
<dbReference type="GeneWiki" id="RFWD2"/>
<dbReference type="GenomeRNAi" id="64326"/>
<dbReference type="Pharos" id="Q8NHY2">
    <property type="development level" value="Tbio"/>
</dbReference>
<dbReference type="PRO" id="PR:Q8NHY2"/>
<dbReference type="Proteomes" id="UP000005640">
    <property type="component" value="Chromosome 1"/>
</dbReference>
<dbReference type="RNAct" id="Q8NHY2">
    <property type="molecule type" value="protein"/>
</dbReference>
<dbReference type="Bgee" id="ENSG00000143207">
    <property type="expression patterns" value="Expressed in ileal mucosa and 183 other cell types or tissues"/>
</dbReference>
<dbReference type="ExpressionAtlas" id="Q8NHY2">
    <property type="expression patterns" value="baseline and differential"/>
</dbReference>
<dbReference type="GO" id="GO:0031464">
    <property type="term" value="C:Cul4A-RING E3 ubiquitin ligase complex"/>
    <property type="evidence" value="ECO:0000314"/>
    <property type="project" value="UniProtKB"/>
</dbReference>
<dbReference type="GO" id="GO:0005829">
    <property type="term" value="C:cytosol"/>
    <property type="evidence" value="ECO:0000304"/>
    <property type="project" value="Reactome"/>
</dbReference>
<dbReference type="GO" id="GO:0000139">
    <property type="term" value="C:Golgi membrane"/>
    <property type="evidence" value="ECO:0007669"/>
    <property type="project" value="Ensembl"/>
</dbReference>
<dbReference type="GO" id="GO:0016607">
    <property type="term" value="C:nuclear speck"/>
    <property type="evidence" value="ECO:0007669"/>
    <property type="project" value="UniProtKB-SubCell"/>
</dbReference>
<dbReference type="GO" id="GO:0005654">
    <property type="term" value="C:nucleoplasm"/>
    <property type="evidence" value="ECO:0000304"/>
    <property type="project" value="Reactome"/>
</dbReference>
<dbReference type="GO" id="GO:0061630">
    <property type="term" value="F:ubiquitin protein ligase activity"/>
    <property type="evidence" value="ECO:0000315"/>
    <property type="project" value="UniProtKB"/>
</dbReference>
<dbReference type="GO" id="GO:0004842">
    <property type="term" value="F:ubiquitin-protein transferase activity"/>
    <property type="evidence" value="ECO:0000304"/>
    <property type="project" value="Reactome"/>
</dbReference>
<dbReference type="GO" id="GO:0008270">
    <property type="term" value="F:zinc ion binding"/>
    <property type="evidence" value="ECO:0007669"/>
    <property type="project" value="UniProtKB-KW"/>
</dbReference>
<dbReference type="GO" id="GO:0032436">
    <property type="term" value="P:positive regulation of proteasomal ubiquitin-dependent protein catabolic process"/>
    <property type="evidence" value="ECO:0000315"/>
    <property type="project" value="UniProtKB"/>
</dbReference>
<dbReference type="GO" id="GO:0043161">
    <property type="term" value="P:proteasome-mediated ubiquitin-dependent protein catabolic process"/>
    <property type="evidence" value="ECO:0000315"/>
    <property type="project" value="UniProtKB"/>
</dbReference>
<dbReference type="GO" id="GO:0016567">
    <property type="term" value="P:protein ubiquitination"/>
    <property type="evidence" value="ECO:0007669"/>
    <property type="project" value="UniProtKB-UniPathway"/>
</dbReference>
<dbReference type="GO" id="GO:0010212">
    <property type="term" value="P:response to ionizing radiation"/>
    <property type="evidence" value="ECO:0000314"/>
    <property type="project" value="UniProtKB"/>
</dbReference>
<dbReference type="CDD" id="cd16504">
    <property type="entry name" value="RING-HC_COP1"/>
    <property type="match status" value="1"/>
</dbReference>
<dbReference type="CDD" id="cd00200">
    <property type="entry name" value="WD40"/>
    <property type="match status" value="1"/>
</dbReference>
<dbReference type="FunFam" id="3.30.40.10:FF:000222">
    <property type="entry name" value="E3 ubiquitin-protein ligase COP1 isoform X2"/>
    <property type="match status" value="1"/>
</dbReference>
<dbReference type="FunFam" id="2.130.10.10:FF:000090">
    <property type="entry name" value="E3 ubiquitin-protein ligase RFWD2 isoform X1"/>
    <property type="match status" value="1"/>
</dbReference>
<dbReference type="Gene3D" id="2.130.10.10">
    <property type="entry name" value="YVTN repeat-like/Quinoprotein amine dehydrogenase"/>
    <property type="match status" value="1"/>
</dbReference>
<dbReference type="Gene3D" id="3.30.40.10">
    <property type="entry name" value="Zinc/RING finger domain, C3HC4 (zinc finger)"/>
    <property type="match status" value="1"/>
</dbReference>
<dbReference type="InterPro" id="IPR042755">
    <property type="entry name" value="COP1"/>
</dbReference>
<dbReference type="InterPro" id="IPR015943">
    <property type="entry name" value="WD40/YVTN_repeat-like_dom_sf"/>
</dbReference>
<dbReference type="InterPro" id="IPR019775">
    <property type="entry name" value="WD40_repeat_CS"/>
</dbReference>
<dbReference type="InterPro" id="IPR036322">
    <property type="entry name" value="WD40_repeat_dom_sf"/>
</dbReference>
<dbReference type="InterPro" id="IPR001680">
    <property type="entry name" value="WD40_rpt"/>
</dbReference>
<dbReference type="InterPro" id="IPR001841">
    <property type="entry name" value="Znf_RING"/>
</dbReference>
<dbReference type="InterPro" id="IPR013083">
    <property type="entry name" value="Znf_RING/FYVE/PHD"/>
</dbReference>
<dbReference type="InterPro" id="IPR017907">
    <property type="entry name" value="Znf_RING_CS"/>
</dbReference>
<dbReference type="PANTHER" id="PTHR44080">
    <property type="entry name" value="E3 UBIQUITIN-PROTEIN LIGASE COP1"/>
    <property type="match status" value="1"/>
</dbReference>
<dbReference type="PANTHER" id="PTHR44080:SF1">
    <property type="entry name" value="E3 UBIQUITIN-PROTEIN LIGASE COP1"/>
    <property type="match status" value="1"/>
</dbReference>
<dbReference type="Pfam" id="PF00400">
    <property type="entry name" value="WD40"/>
    <property type="match status" value="5"/>
</dbReference>
<dbReference type="Pfam" id="PF13923">
    <property type="entry name" value="zf-C3HC4_2"/>
    <property type="match status" value="1"/>
</dbReference>
<dbReference type="SMART" id="SM00184">
    <property type="entry name" value="RING"/>
    <property type="match status" value="1"/>
</dbReference>
<dbReference type="SMART" id="SM00320">
    <property type="entry name" value="WD40"/>
    <property type="match status" value="6"/>
</dbReference>
<dbReference type="SUPFAM" id="SSF57850">
    <property type="entry name" value="RING/U-box"/>
    <property type="match status" value="1"/>
</dbReference>
<dbReference type="SUPFAM" id="SSF50978">
    <property type="entry name" value="WD40 repeat-like"/>
    <property type="match status" value="1"/>
</dbReference>
<dbReference type="PROSITE" id="PS00678">
    <property type="entry name" value="WD_REPEATS_1"/>
    <property type="match status" value="1"/>
</dbReference>
<dbReference type="PROSITE" id="PS50082">
    <property type="entry name" value="WD_REPEATS_2"/>
    <property type="match status" value="2"/>
</dbReference>
<dbReference type="PROSITE" id="PS50294">
    <property type="entry name" value="WD_REPEATS_REGION"/>
    <property type="match status" value="1"/>
</dbReference>
<dbReference type="PROSITE" id="PS00518">
    <property type="entry name" value="ZF_RING_1"/>
    <property type="match status" value="1"/>
</dbReference>
<dbReference type="PROSITE" id="PS50089">
    <property type="entry name" value="ZF_RING_2"/>
    <property type="match status" value="1"/>
</dbReference>